<gene>
    <name evidence="1" type="primary">fabH</name>
    <name type="ordered locus">Bphy_0828</name>
</gene>
<sequence length="329" mass="34905">MAQSTTYSRVLGTGSYLPPNRVSNQDLAARLAKQGIETSDEWIVARTGIHARHFAEPDVTTSDLALIASQRAIEAADVDPQAIDLIIVATSTPDFVFPSTACLLQNKLGIKNNGAAFDVQAVCSGFAYAVATADSFIRSGQHRTALVVGAETFSRILDFNDRTTCVLFGDGAGAVVLQASDEPGVLASALHADGSHSNILCTPGNVNGGIVQGSAFLHMDGQAVFKLAVNVLEKVAVEALQKADLQPEQIDWLIPHQANIRIMQSTCRKLGLPQERMVVTVHEHGNTSAASIPLALDVAVRDGRIQRGHNVLIEGVGGGFTWGASVIRY</sequence>
<organism>
    <name type="scientific">Paraburkholderia phymatum (strain DSM 17167 / CIP 108236 / LMG 21445 / STM815)</name>
    <name type="common">Burkholderia phymatum</name>
    <dbReference type="NCBI Taxonomy" id="391038"/>
    <lineage>
        <taxon>Bacteria</taxon>
        <taxon>Pseudomonadati</taxon>
        <taxon>Pseudomonadota</taxon>
        <taxon>Betaproteobacteria</taxon>
        <taxon>Burkholderiales</taxon>
        <taxon>Burkholderiaceae</taxon>
        <taxon>Paraburkholderia</taxon>
    </lineage>
</organism>
<keyword id="KW-0012">Acyltransferase</keyword>
<keyword id="KW-0963">Cytoplasm</keyword>
<keyword id="KW-0275">Fatty acid biosynthesis</keyword>
<keyword id="KW-0276">Fatty acid metabolism</keyword>
<keyword id="KW-0444">Lipid biosynthesis</keyword>
<keyword id="KW-0443">Lipid metabolism</keyword>
<keyword id="KW-0511">Multifunctional enzyme</keyword>
<keyword id="KW-1185">Reference proteome</keyword>
<keyword id="KW-0808">Transferase</keyword>
<name>FABH_PARP8</name>
<accession>B2JFI9</accession>
<proteinExistence type="inferred from homology"/>
<evidence type="ECO:0000255" key="1">
    <source>
        <dbReference type="HAMAP-Rule" id="MF_01815"/>
    </source>
</evidence>
<comment type="function">
    <text evidence="1">Catalyzes the condensation reaction of fatty acid synthesis by the addition to an acyl acceptor of two carbons from malonyl-ACP. Catalyzes the first condensation reaction which initiates fatty acid synthesis and may therefore play a role in governing the total rate of fatty acid production. Possesses both acetoacetyl-ACP synthase and acetyl transacylase activities. Its substrate specificity determines the biosynthesis of branched-chain and/or straight-chain of fatty acids.</text>
</comment>
<comment type="catalytic activity">
    <reaction evidence="1">
        <text>malonyl-[ACP] + acetyl-CoA + H(+) = 3-oxobutanoyl-[ACP] + CO2 + CoA</text>
        <dbReference type="Rhea" id="RHEA:12080"/>
        <dbReference type="Rhea" id="RHEA-COMP:9623"/>
        <dbReference type="Rhea" id="RHEA-COMP:9625"/>
        <dbReference type="ChEBI" id="CHEBI:15378"/>
        <dbReference type="ChEBI" id="CHEBI:16526"/>
        <dbReference type="ChEBI" id="CHEBI:57287"/>
        <dbReference type="ChEBI" id="CHEBI:57288"/>
        <dbReference type="ChEBI" id="CHEBI:78449"/>
        <dbReference type="ChEBI" id="CHEBI:78450"/>
        <dbReference type="EC" id="2.3.1.180"/>
    </reaction>
</comment>
<comment type="pathway">
    <text evidence="1">Lipid metabolism; fatty acid biosynthesis.</text>
</comment>
<comment type="subunit">
    <text evidence="1">Homodimer.</text>
</comment>
<comment type="subcellular location">
    <subcellularLocation>
        <location evidence="1">Cytoplasm</location>
    </subcellularLocation>
</comment>
<comment type="domain">
    <text evidence="1">The last Arg residue of the ACP-binding site is essential for the weak association between ACP/AcpP and FabH.</text>
</comment>
<comment type="similarity">
    <text evidence="1">Belongs to the thiolase-like superfamily. FabH family.</text>
</comment>
<protein>
    <recommendedName>
        <fullName evidence="1">Beta-ketoacyl-[acyl-carrier-protein] synthase III</fullName>
        <shortName evidence="1">Beta-ketoacyl-ACP synthase III</shortName>
        <shortName evidence="1">KAS III</shortName>
        <ecNumber evidence="1">2.3.1.180</ecNumber>
    </recommendedName>
    <alternativeName>
        <fullName evidence="1">3-oxoacyl-[acyl-carrier-protein] synthase 3</fullName>
    </alternativeName>
    <alternativeName>
        <fullName evidence="1">3-oxoacyl-[acyl-carrier-protein] synthase III</fullName>
    </alternativeName>
</protein>
<feature type="chain" id="PRO_1000187854" description="Beta-ketoacyl-[acyl-carrier-protein] synthase III">
    <location>
        <begin position="1"/>
        <end position="329"/>
    </location>
</feature>
<feature type="region of interest" description="ACP-binding" evidence="1">
    <location>
        <begin position="257"/>
        <end position="261"/>
    </location>
</feature>
<feature type="active site" evidence="1">
    <location>
        <position position="123"/>
    </location>
</feature>
<feature type="active site" evidence="1">
    <location>
        <position position="256"/>
    </location>
</feature>
<feature type="active site" evidence="1">
    <location>
        <position position="286"/>
    </location>
</feature>
<dbReference type="EC" id="2.3.1.180" evidence="1"/>
<dbReference type="EMBL" id="CP001043">
    <property type="protein sequence ID" value="ACC70017.1"/>
    <property type="molecule type" value="Genomic_DNA"/>
</dbReference>
<dbReference type="RefSeq" id="WP_012400237.1">
    <property type="nucleotide sequence ID" value="NC_010622.1"/>
</dbReference>
<dbReference type="SMR" id="B2JFI9"/>
<dbReference type="STRING" id="391038.Bphy_0828"/>
<dbReference type="KEGG" id="bph:Bphy_0828"/>
<dbReference type="eggNOG" id="COG0332">
    <property type="taxonomic scope" value="Bacteria"/>
</dbReference>
<dbReference type="HOGENOM" id="CLU_039592_3_1_4"/>
<dbReference type="OrthoDB" id="9815506at2"/>
<dbReference type="UniPathway" id="UPA00094"/>
<dbReference type="Proteomes" id="UP000001192">
    <property type="component" value="Chromosome 1"/>
</dbReference>
<dbReference type="GO" id="GO:0005737">
    <property type="term" value="C:cytoplasm"/>
    <property type="evidence" value="ECO:0007669"/>
    <property type="project" value="UniProtKB-SubCell"/>
</dbReference>
<dbReference type="GO" id="GO:0004315">
    <property type="term" value="F:3-oxoacyl-[acyl-carrier-protein] synthase activity"/>
    <property type="evidence" value="ECO:0007669"/>
    <property type="project" value="InterPro"/>
</dbReference>
<dbReference type="GO" id="GO:0033818">
    <property type="term" value="F:beta-ketoacyl-acyl-carrier-protein synthase III activity"/>
    <property type="evidence" value="ECO:0007669"/>
    <property type="project" value="UniProtKB-UniRule"/>
</dbReference>
<dbReference type="GO" id="GO:0006633">
    <property type="term" value="P:fatty acid biosynthetic process"/>
    <property type="evidence" value="ECO:0007669"/>
    <property type="project" value="UniProtKB-UniRule"/>
</dbReference>
<dbReference type="CDD" id="cd00830">
    <property type="entry name" value="KAS_III"/>
    <property type="match status" value="1"/>
</dbReference>
<dbReference type="FunFam" id="3.40.47.10:FF:000004">
    <property type="entry name" value="3-oxoacyl-[acyl-carrier-protein] synthase 3"/>
    <property type="match status" value="1"/>
</dbReference>
<dbReference type="Gene3D" id="3.40.47.10">
    <property type="match status" value="2"/>
</dbReference>
<dbReference type="HAMAP" id="MF_01815">
    <property type="entry name" value="FabH"/>
    <property type="match status" value="1"/>
</dbReference>
<dbReference type="InterPro" id="IPR013747">
    <property type="entry name" value="ACP_syn_III_C"/>
</dbReference>
<dbReference type="InterPro" id="IPR013751">
    <property type="entry name" value="ACP_syn_III_N"/>
</dbReference>
<dbReference type="InterPro" id="IPR004655">
    <property type="entry name" value="FabH"/>
</dbReference>
<dbReference type="InterPro" id="IPR016039">
    <property type="entry name" value="Thiolase-like"/>
</dbReference>
<dbReference type="NCBIfam" id="TIGR00747">
    <property type="entry name" value="fabH"/>
    <property type="match status" value="1"/>
</dbReference>
<dbReference type="NCBIfam" id="NF006829">
    <property type="entry name" value="PRK09352.1"/>
    <property type="match status" value="1"/>
</dbReference>
<dbReference type="PANTHER" id="PTHR43091">
    <property type="entry name" value="3-OXOACYL-[ACYL-CARRIER-PROTEIN] SYNTHASE"/>
    <property type="match status" value="1"/>
</dbReference>
<dbReference type="PANTHER" id="PTHR43091:SF1">
    <property type="entry name" value="BETA-KETOACYL-[ACYL-CARRIER-PROTEIN] SYNTHASE III, CHLOROPLASTIC"/>
    <property type="match status" value="1"/>
</dbReference>
<dbReference type="Pfam" id="PF08545">
    <property type="entry name" value="ACP_syn_III"/>
    <property type="match status" value="1"/>
</dbReference>
<dbReference type="Pfam" id="PF08541">
    <property type="entry name" value="ACP_syn_III_C"/>
    <property type="match status" value="1"/>
</dbReference>
<dbReference type="SUPFAM" id="SSF53901">
    <property type="entry name" value="Thiolase-like"/>
    <property type="match status" value="1"/>
</dbReference>
<reference key="1">
    <citation type="journal article" date="2014" name="Stand. Genomic Sci.">
        <title>Complete genome sequence of Burkholderia phymatum STM815(T), a broad host range and efficient nitrogen-fixing symbiont of Mimosa species.</title>
        <authorList>
            <person name="Moulin L."/>
            <person name="Klonowska A."/>
            <person name="Caroline B."/>
            <person name="Booth K."/>
            <person name="Vriezen J.A."/>
            <person name="Melkonian R."/>
            <person name="James E.K."/>
            <person name="Young J.P."/>
            <person name="Bena G."/>
            <person name="Hauser L."/>
            <person name="Land M."/>
            <person name="Kyrpides N."/>
            <person name="Bruce D."/>
            <person name="Chain P."/>
            <person name="Copeland A."/>
            <person name="Pitluck S."/>
            <person name="Woyke T."/>
            <person name="Lizotte-Waniewski M."/>
            <person name="Bristow J."/>
            <person name="Riley M."/>
        </authorList>
    </citation>
    <scope>NUCLEOTIDE SEQUENCE [LARGE SCALE GENOMIC DNA]</scope>
    <source>
        <strain>DSM 17167 / CIP 108236 / LMG 21445 / STM815</strain>
    </source>
</reference>